<organism>
    <name type="scientific">Schizosaccharomyces pombe (strain 972 / ATCC 24843)</name>
    <name type="common">Fission yeast</name>
    <dbReference type="NCBI Taxonomy" id="284812"/>
    <lineage>
        <taxon>Eukaryota</taxon>
        <taxon>Fungi</taxon>
        <taxon>Dikarya</taxon>
        <taxon>Ascomycota</taxon>
        <taxon>Taphrinomycotina</taxon>
        <taxon>Schizosaccharomycetes</taxon>
        <taxon>Schizosaccharomycetales</taxon>
        <taxon>Schizosaccharomycetaceae</taxon>
        <taxon>Schizosaccharomyces</taxon>
    </lineage>
</organism>
<sequence>MSDDRFAEDEIIQQRRKRRLEILKKYQQTGNGHSDLSIPEKKLKEDVDQVSTTKPIEAVPKMKTNASKIEINKEGSNSNTKLDVTNSTTSDSPSIKSSVQIEDTEDDMFADSPSPSVKRQNTGKGISTLTRSFADMQDNWDDIEGYYKVVLMEELDSRYIVQSNLGKGMFSTVVSALDRNRNQTFAIKIIRNNEVMYKEGLKEVSILERLQAADREGKQHIIHYERHFMHKNHLCMVFEMLSLNLRDILKKFGRNVGLSIKAVRLYAYQMFMALDLLKQCNVIHSDIKPDNMLVNEKRNILKICDLGSASDASENEITPYLVSRFYRAPEIILGFPYSCPIDTWSVGCSLYELYTGQILFPGRTNNQMLRYMMECKGKFSHKMLKRSQFLNDHFDADFNFIQIDHDPITNQETRKPVKFSKPTKDIRSRLKEVPTSTDEEFIIRQELMDLLEKCLELNPEKRVPPEVALKHPFFIKK</sequence>
<dbReference type="EC" id="2.7.11.1"/>
<dbReference type="EMBL" id="L10739">
    <property type="protein sequence ID" value="AAB48343.1"/>
    <property type="molecule type" value="Genomic_DNA"/>
</dbReference>
<dbReference type="EMBL" id="CU329672">
    <property type="protein sequence ID" value="CAA20718.1"/>
    <property type="molecule type" value="Genomic_DNA"/>
</dbReference>
<dbReference type="PIR" id="T11720">
    <property type="entry name" value="T11720"/>
</dbReference>
<dbReference type="RefSeq" id="NP_588261.1">
    <property type="nucleotide sequence ID" value="NM_001023251.2"/>
</dbReference>
<dbReference type="SMR" id="Q07538"/>
<dbReference type="BioGRID" id="275879">
    <property type="interactions" value="237"/>
</dbReference>
<dbReference type="FunCoup" id="Q07538">
    <property type="interactions" value="161"/>
</dbReference>
<dbReference type="STRING" id="284812.Q07538"/>
<dbReference type="iPTMnet" id="Q07538"/>
<dbReference type="PaxDb" id="4896-SPCC777.14.1"/>
<dbReference type="EnsemblFungi" id="SPCC777.14.1">
    <property type="protein sequence ID" value="SPCC777.14.1:pep"/>
    <property type="gene ID" value="SPCC777.14"/>
</dbReference>
<dbReference type="GeneID" id="2539312"/>
<dbReference type="KEGG" id="spo:2539312"/>
<dbReference type="PomBase" id="SPCC777.14">
    <property type="gene designation" value="prp4"/>
</dbReference>
<dbReference type="VEuPathDB" id="FungiDB:SPCC777.14"/>
<dbReference type="eggNOG" id="KOG0670">
    <property type="taxonomic scope" value="Eukaryota"/>
</dbReference>
<dbReference type="HOGENOM" id="CLU_000288_5_5_1"/>
<dbReference type="InParanoid" id="Q07538"/>
<dbReference type="OMA" id="PEIIMGH"/>
<dbReference type="PhylomeDB" id="Q07538"/>
<dbReference type="BRENDA" id="2.7.11.1">
    <property type="organism ID" value="5613"/>
</dbReference>
<dbReference type="PRO" id="PR:Q07538"/>
<dbReference type="Proteomes" id="UP000002485">
    <property type="component" value="Chromosome III"/>
</dbReference>
<dbReference type="GO" id="GO:0005524">
    <property type="term" value="F:ATP binding"/>
    <property type="evidence" value="ECO:0007669"/>
    <property type="project" value="UniProtKB-KW"/>
</dbReference>
<dbReference type="GO" id="GO:0004672">
    <property type="term" value="F:protein kinase activity"/>
    <property type="evidence" value="ECO:0000314"/>
    <property type="project" value="PomBase"/>
</dbReference>
<dbReference type="GO" id="GO:0106310">
    <property type="term" value="F:protein serine kinase activity"/>
    <property type="evidence" value="ECO:0007669"/>
    <property type="project" value="RHEA"/>
</dbReference>
<dbReference type="GO" id="GO:0004674">
    <property type="term" value="F:protein serine/threonine kinase activity"/>
    <property type="evidence" value="ECO:0000314"/>
    <property type="project" value="PomBase"/>
</dbReference>
<dbReference type="GO" id="GO:0045292">
    <property type="term" value="P:mRNA cis splicing, via spliceosome"/>
    <property type="evidence" value="ECO:0000315"/>
    <property type="project" value="PomBase"/>
</dbReference>
<dbReference type="GO" id="GO:1905746">
    <property type="term" value="P:positive regulation of mRNA cis splicing, via spliceosome"/>
    <property type="evidence" value="ECO:0000315"/>
    <property type="project" value="PomBase"/>
</dbReference>
<dbReference type="GO" id="GO:0023052">
    <property type="term" value="P:signaling"/>
    <property type="evidence" value="ECO:0000305"/>
    <property type="project" value="PomBase"/>
</dbReference>
<dbReference type="CDD" id="cd14135">
    <property type="entry name" value="STKc_PRP4"/>
    <property type="match status" value="1"/>
</dbReference>
<dbReference type="FunFam" id="1.10.510.10:FF:000078">
    <property type="entry name" value="Serine/threonine-protein kinase PRP4 homolog"/>
    <property type="match status" value="1"/>
</dbReference>
<dbReference type="Gene3D" id="3.30.200.20">
    <property type="entry name" value="Phosphorylase Kinase, domain 1"/>
    <property type="match status" value="1"/>
</dbReference>
<dbReference type="Gene3D" id="1.10.510.10">
    <property type="entry name" value="Transferase(Phosphotransferase) domain 1"/>
    <property type="match status" value="1"/>
</dbReference>
<dbReference type="InterPro" id="IPR011009">
    <property type="entry name" value="Kinase-like_dom_sf"/>
</dbReference>
<dbReference type="InterPro" id="IPR000719">
    <property type="entry name" value="Prot_kinase_dom"/>
</dbReference>
<dbReference type="InterPro" id="IPR017441">
    <property type="entry name" value="Protein_kinase_ATP_BS"/>
</dbReference>
<dbReference type="InterPro" id="IPR008271">
    <property type="entry name" value="Ser/Thr_kinase_AS"/>
</dbReference>
<dbReference type="InterPro" id="IPR050494">
    <property type="entry name" value="Ser_Thr_dual-spec_kinase"/>
</dbReference>
<dbReference type="InterPro" id="IPR044092">
    <property type="entry name" value="STKc_PRP4"/>
</dbReference>
<dbReference type="PANTHER" id="PTHR24058">
    <property type="entry name" value="DUAL SPECIFICITY PROTEIN KINASE"/>
    <property type="match status" value="1"/>
</dbReference>
<dbReference type="PANTHER" id="PTHR24058:SF103">
    <property type="entry name" value="SERINE_THREONINE-PROTEIN KINASE PRP4 HOMOLOG"/>
    <property type="match status" value="1"/>
</dbReference>
<dbReference type="Pfam" id="PF00069">
    <property type="entry name" value="Pkinase"/>
    <property type="match status" value="1"/>
</dbReference>
<dbReference type="SMART" id="SM00220">
    <property type="entry name" value="S_TKc"/>
    <property type="match status" value="1"/>
</dbReference>
<dbReference type="SUPFAM" id="SSF56112">
    <property type="entry name" value="Protein kinase-like (PK-like)"/>
    <property type="match status" value="1"/>
</dbReference>
<dbReference type="PROSITE" id="PS00107">
    <property type="entry name" value="PROTEIN_KINASE_ATP"/>
    <property type="match status" value="1"/>
</dbReference>
<dbReference type="PROSITE" id="PS50011">
    <property type="entry name" value="PROTEIN_KINASE_DOM"/>
    <property type="match status" value="1"/>
</dbReference>
<dbReference type="PROSITE" id="PS00108">
    <property type="entry name" value="PROTEIN_KINASE_ST"/>
    <property type="match status" value="1"/>
</dbReference>
<name>PRP4_SCHPO</name>
<comment type="function">
    <text>Has a role in pre-mRNA splicing and is essential for growth. Phosphorylates srp1.</text>
</comment>
<comment type="catalytic activity">
    <reaction>
        <text>L-seryl-[protein] + ATP = O-phospho-L-seryl-[protein] + ADP + H(+)</text>
        <dbReference type="Rhea" id="RHEA:17989"/>
        <dbReference type="Rhea" id="RHEA-COMP:9863"/>
        <dbReference type="Rhea" id="RHEA-COMP:11604"/>
        <dbReference type="ChEBI" id="CHEBI:15378"/>
        <dbReference type="ChEBI" id="CHEBI:29999"/>
        <dbReference type="ChEBI" id="CHEBI:30616"/>
        <dbReference type="ChEBI" id="CHEBI:83421"/>
        <dbReference type="ChEBI" id="CHEBI:456216"/>
        <dbReference type="EC" id="2.7.11.1"/>
    </reaction>
</comment>
<comment type="catalytic activity">
    <reaction>
        <text>L-threonyl-[protein] + ATP = O-phospho-L-threonyl-[protein] + ADP + H(+)</text>
        <dbReference type="Rhea" id="RHEA:46608"/>
        <dbReference type="Rhea" id="RHEA-COMP:11060"/>
        <dbReference type="Rhea" id="RHEA-COMP:11605"/>
        <dbReference type="ChEBI" id="CHEBI:15378"/>
        <dbReference type="ChEBI" id="CHEBI:30013"/>
        <dbReference type="ChEBI" id="CHEBI:30616"/>
        <dbReference type="ChEBI" id="CHEBI:61977"/>
        <dbReference type="ChEBI" id="CHEBI:456216"/>
        <dbReference type="EC" id="2.7.11.1"/>
    </reaction>
</comment>
<comment type="similarity">
    <text evidence="5">Belongs to the protein kinase superfamily. CMGC Ser/Thr protein kinase family.</text>
</comment>
<proteinExistence type="evidence at protein level"/>
<keyword id="KW-0067">ATP-binding</keyword>
<keyword id="KW-0418">Kinase</keyword>
<keyword id="KW-0507">mRNA processing</keyword>
<keyword id="KW-0508">mRNA splicing</keyword>
<keyword id="KW-0547">Nucleotide-binding</keyword>
<keyword id="KW-0597">Phosphoprotein</keyword>
<keyword id="KW-1185">Reference proteome</keyword>
<keyword id="KW-0723">Serine/threonine-protein kinase</keyword>
<keyword id="KW-0808">Transferase</keyword>
<protein>
    <recommendedName>
        <fullName>Serine/threonine-protein kinase prp4</fullName>
        <ecNumber>2.7.11.1</ecNumber>
    </recommendedName>
</protein>
<reference key="1">
    <citation type="journal article" date="1993" name="Nucleic Acids Res.">
        <title>The fission yeast prp4+ gene involved in pre-mRNA splicing codes for a predicted serine/threonine kinase and is essential for growth.</title>
        <authorList>
            <person name="Alahari S.K."/>
            <person name="Schmidt H."/>
            <person name="Kaeufer N.F."/>
        </authorList>
    </citation>
    <scope>NUCLEOTIDE SEQUENCE [GENOMIC DNA]</scope>
</reference>
<reference key="2">
    <citation type="submission" date="1997-02" db="EMBL/GenBank/DDBJ databases">
        <authorList>
            <person name="Kaeufer N.F."/>
        </authorList>
    </citation>
    <scope>SEQUENCE REVISION TO C-TERMINUS</scope>
</reference>
<reference key="3">
    <citation type="journal article" date="2002" name="Nature">
        <title>The genome sequence of Schizosaccharomyces pombe.</title>
        <authorList>
            <person name="Wood V."/>
            <person name="Gwilliam R."/>
            <person name="Rajandream M.A."/>
            <person name="Lyne M.H."/>
            <person name="Lyne R."/>
            <person name="Stewart A."/>
            <person name="Sgouros J.G."/>
            <person name="Peat N."/>
            <person name="Hayles J."/>
            <person name="Baker S.G."/>
            <person name="Basham D."/>
            <person name="Bowman S."/>
            <person name="Brooks K."/>
            <person name="Brown D."/>
            <person name="Brown S."/>
            <person name="Chillingworth T."/>
            <person name="Churcher C.M."/>
            <person name="Collins M."/>
            <person name="Connor R."/>
            <person name="Cronin A."/>
            <person name="Davis P."/>
            <person name="Feltwell T."/>
            <person name="Fraser A."/>
            <person name="Gentles S."/>
            <person name="Goble A."/>
            <person name="Hamlin N."/>
            <person name="Harris D.E."/>
            <person name="Hidalgo J."/>
            <person name="Hodgson G."/>
            <person name="Holroyd S."/>
            <person name="Hornsby T."/>
            <person name="Howarth S."/>
            <person name="Huckle E.J."/>
            <person name="Hunt S."/>
            <person name="Jagels K."/>
            <person name="James K.D."/>
            <person name="Jones L."/>
            <person name="Jones M."/>
            <person name="Leather S."/>
            <person name="McDonald S."/>
            <person name="McLean J."/>
            <person name="Mooney P."/>
            <person name="Moule S."/>
            <person name="Mungall K.L."/>
            <person name="Murphy L.D."/>
            <person name="Niblett D."/>
            <person name="Odell C."/>
            <person name="Oliver K."/>
            <person name="O'Neil S."/>
            <person name="Pearson D."/>
            <person name="Quail M.A."/>
            <person name="Rabbinowitsch E."/>
            <person name="Rutherford K.M."/>
            <person name="Rutter S."/>
            <person name="Saunders D."/>
            <person name="Seeger K."/>
            <person name="Sharp S."/>
            <person name="Skelton J."/>
            <person name="Simmonds M.N."/>
            <person name="Squares R."/>
            <person name="Squares S."/>
            <person name="Stevens K."/>
            <person name="Taylor K."/>
            <person name="Taylor R.G."/>
            <person name="Tivey A."/>
            <person name="Walsh S.V."/>
            <person name="Warren T."/>
            <person name="Whitehead S."/>
            <person name="Woodward J.R."/>
            <person name="Volckaert G."/>
            <person name="Aert R."/>
            <person name="Robben J."/>
            <person name="Grymonprez B."/>
            <person name="Weltjens I."/>
            <person name="Vanstreels E."/>
            <person name="Rieger M."/>
            <person name="Schaefer M."/>
            <person name="Mueller-Auer S."/>
            <person name="Gabel C."/>
            <person name="Fuchs M."/>
            <person name="Duesterhoeft A."/>
            <person name="Fritzc C."/>
            <person name="Holzer E."/>
            <person name="Moestl D."/>
            <person name="Hilbert H."/>
            <person name="Borzym K."/>
            <person name="Langer I."/>
            <person name="Beck A."/>
            <person name="Lehrach H."/>
            <person name="Reinhardt R."/>
            <person name="Pohl T.M."/>
            <person name="Eger P."/>
            <person name="Zimmermann W."/>
            <person name="Wedler H."/>
            <person name="Wambutt R."/>
            <person name="Purnelle B."/>
            <person name="Goffeau A."/>
            <person name="Cadieu E."/>
            <person name="Dreano S."/>
            <person name="Gloux S."/>
            <person name="Lelaure V."/>
            <person name="Mottier S."/>
            <person name="Galibert F."/>
            <person name="Aves S.J."/>
            <person name="Xiang Z."/>
            <person name="Hunt C."/>
            <person name="Moore K."/>
            <person name="Hurst S.M."/>
            <person name="Lucas M."/>
            <person name="Rochet M."/>
            <person name="Gaillardin C."/>
            <person name="Tallada V.A."/>
            <person name="Garzon A."/>
            <person name="Thode G."/>
            <person name="Daga R.R."/>
            <person name="Cruzado L."/>
            <person name="Jimenez J."/>
            <person name="Sanchez M."/>
            <person name="del Rey F."/>
            <person name="Benito J."/>
            <person name="Dominguez A."/>
            <person name="Revuelta J.L."/>
            <person name="Moreno S."/>
            <person name="Armstrong J."/>
            <person name="Forsburg S.L."/>
            <person name="Cerutti L."/>
            <person name="Lowe T."/>
            <person name="McCombie W.R."/>
            <person name="Paulsen I."/>
            <person name="Potashkin J."/>
            <person name="Shpakovski G.V."/>
            <person name="Ussery D."/>
            <person name="Barrell B.G."/>
            <person name="Nurse P."/>
        </authorList>
    </citation>
    <scope>NUCLEOTIDE SEQUENCE [LARGE SCALE GENOMIC DNA]</scope>
    <source>
        <strain>972 / ATCC 24843</strain>
    </source>
</reference>
<reference key="4">
    <citation type="journal article" date="2008" name="J. Proteome Res.">
        <title>Phosphoproteome analysis of fission yeast.</title>
        <authorList>
            <person name="Wilson-Grady J.T."/>
            <person name="Villen J."/>
            <person name="Gygi S.P."/>
        </authorList>
    </citation>
    <scope>PHOSPHORYLATION [LARGE SCALE ANALYSIS] AT SER-92 AND TYR-320</scope>
    <scope>IDENTIFICATION BY MASS SPECTROMETRY</scope>
</reference>
<accession>Q07538</accession>
<accession>P87202</accession>
<evidence type="ECO:0000255" key="1">
    <source>
        <dbReference type="PROSITE-ProRule" id="PRU00159"/>
    </source>
</evidence>
<evidence type="ECO:0000255" key="2">
    <source>
        <dbReference type="PROSITE-ProRule" id="PRU10027"/>
    </source>
</evidence>
<evidence type="ECO:0000256" key="3">
    <source>
        <dbReference type="SAM" id="MobiDB-lite"/>
    </source>
</evidence>
<evidence type="ECO:0000269" key="4">
    <source>
    </source>
</evidence>
<evidence type="ECO:0000305" key="5"/>
<feature type="chain" id="PRO_0000086585" description="Serine/threonine-protein kinase prp4">
    <location>
        <begin position="1"/>
        <end position="477"/>
    </location>
</feature>
<feature type="domain" description="Protein kinase" evidence="1">
    <location>
        <begin position="159"/>
        <end position="477"/>
    </location>
</feature>
<feature type="region of interest" description="Disordered" evidence="3">
    <location>
        <begin position="25"/>
        <end position="123"/>
    </location>
</feature>
<feature type="compositionally biased region" description="Basic and acidic residues" evidence="3">
    <location>
        <begin position="38"/>
        <end position="47"/>
    </location>
</feature>
<feature type="compositionally biased region" description="Polar residues" evidence="3">
    <location>
        <begin position="74"/>
        <end position="86"/>
    </location>
</feature>
<feature type="compositionally biased region" description="Low complexity" evidence="3">
    <location>
        <begin position="87"/>
        <end position="98"/>
    </location>
</feature>
<feature type="compositionally biased region" description="Polar residues" evidence="3">
    <location>
        <begin position="113"/>
        <end position="123"/>
    </location>
</feature>
<feature type="active site" description="Proton acceptor" evidence="1 2">
    <location>
        <position position="286"/>
    </location>
</feature>
<feature type="binding site" evidence="1">
    <location>
        <begin position="165"/>
        <end position="173"/>
    </location>
    <ligand>
        <name>ATP</name>
        <dbReference type="ChEBI" id="CHEBI:30616"/>
    </ligand>
</feature>
<feature type="binding site" evidence="1">
    <location>
        <position position="188"/>
    </location>
    <ligand>
        <name>ATP</name>
        <dbReference type="ChEBI" id="CHEBI:30616"/>
    </ligand>
</feature>
<feature type="modified residue" description="Phosphoserine" evidence="4">
    <location>
        <position position="92"/>
    </location>
</feature>
<feature type="modified residue" description="Phosphotyrosine" evidence="4">
    <location>
        <position position="320"/>
    </location>
</feature>
<gene>
    <name type="primary">prp4</name>
    <name type="ORF">SPCC777.14</name>
</gene>